<keyword id="KW-0028">Amino-acid biosynthesis</keyword>
<keyword id="KW-0963">Cytoplasm</keyword>
<keyword id="KW-0315">Glutamine amidotransferase</keyword>
<keyword id="KW-0368">Histidine biosynthesis</keyword>
<keyword id="KW-0378">Hydrolase</keyword>
<keyword id="KW-0456">Lyase</keyword>
<keyword id="KW-1185">Reference proteome</keyword>
<sequence length="201" mass="21835">MVFIADYGAGNLRSVQKAFDYLGIPATVSSDPAKMAGCRKVVLPGVGAFGQAIEALDRLGFTDALSEHVDKGGHLFGICLGMQLMLSDSEEMGSHRGLGLIPGSVRHFQSDSDKIPQIGWNSIDLKQESVLFRGIADHSFFYFVHSYYCDPLEASSIASTTWFAGKNFCSAIEKNGIFAVQFHPEKSSEAGLQVLRNFAEC</sequence>
<reference key="1">
    <citation type="submission" date="2005-08" db="EMBL/GenBank/DDBJ databases">
        <title>Complete sequence of Pelodictyon luteolum DSM 273.</title>
        <authorList>
            <consortium name="US DOE Joint Genome Institute"/>
            <person name="Copeland A."/>
            <person name="Lucas S."/>
            <person name="Lapidus A."/>
            <person name="Barry K."/>
            <person name="Detter J.C."/>
            <person name="Glavina T."/>
            <person name="Hammon N."/>
            <person name="Israni S."/>
            <person name="Pitluck S."/>
            <person name="Bryant D."/>
            <person name="Schmutz J."/>
            <person name="Larimer F."/>
            <person name="Land M."/>
            <person name="Kyrpides N."/>
            <person name="Ivanova N."/>
            <person name="Richardson P."/>
        </authorList>
    </citation>
    <scope>NUCLEOTIDE SEQUENCE [LARGE SCALE GENOMIC DNA]</scope>
    <source>
        <strain>DSM 273 / BCRC 81028 / 2530</strain>
    </source>
</reference>
<feature type="chain" id="PRO_0000231744" description="Imidazole glycerol phosphate synthase subunit HisH">
    <location>
        <begin position="1"/>
        <end position="201"/>
    </location>
</feature>
<feature type="domain" description="Glutamine amidotransferase type-1" evidence="1">
    <location>
        <begin position="1"/>
        <end position="201"/>
    </location>
</feature>
<feature type="active site" description="Nucleophile" evidence="1">
    <location>
        <position position="79"/>
    </location>
</feature>
<feature type="active site" evidence="1">
    <location>
        <position position="183"/>
    </location>
</feature>
<feature type="active site" evidence="1">
    <location>
        <position position="185"/>
    </location>
</feature>
<proteinExistence type="inferred from homology"/>
<protein>
    <recommendedName>
        <fullName evidence="1">Imidazole glycerol phosphate synthase subunit HisH</fullName>
        <ecNumber evidence="1">4.3.2.10</ecNumber>
    </recommendedName>
    <alternativeName>
        <fullName evidence="1">IGP synthase glutaminase subunit</fullName>
        <ecNumber evidence="1">3.5.1.2</ecNumber>
    </alternativeName>
    <alternativeName>
        <fullName evidence="1">IGP synthase subunit HisH</fullName>
    </alternativeName>
    <alternativeName>
        <fullName evidence="1">ImGP synthase subunit HisH</fullName>
        <shortName evidence="1">IGPS subunit HisH</shortName>
    </alternativeName>
</protein>
<gene>
    <name evidence="1" type="primary">hisH</name>
    <name type="ordered locus">Plut_1691</name>
</gene>
<evidence type="ECO:0000255" key="1">
    <source>
        <dbReference type="HAMAP-Rule" id="MF_00278"/>
    </source>
</evidence>
<name>HIS5_CHLL3</name>
<comment type="function">
    <text evidence="1">IGPS catalyzes the conversion of PRFAR and glutamine to IGP, AICAR and glutamate. The HisH subunit catalyzes the hydrolysis of glutamine to glutamate and ammonia as part of the synthesis of IGP and AICAR. The resulting ammonia molecule is channeled to the active site of HisF.</text>
</comment>
<comment type="catalytic activity">
    <reaction evidence="1">
        <text>5-[(5-phospho-1-deoxy-D-ribulos-1-ylimino)methylamino]-1-(5-phospho-beta-D-ribosyl)imidazole-4-carboxamide + L-glutamine = D-erythro-1-(imidazol-4-yl)glycerol 3-phosphate + 5-amino-1-(5-phospho-beta-D-ribosyl)imidazole-4-carboxamide + L-glutamate + H(+)</text>
        <dbReference type="Rhea" id="RHEA:24793"/>
        <dbReference type="ChEBI" id="CHEBI:15378"/>
        <dbReference type="ChEBI" id="CHEBI:29985"/>
        <dbReference type="ChEBI" id="CHEBI:58278"/>
        <dbReference type="ChEBI" id="CHEBI:58359"/>
        <dbReference type="ChEBI" id="CHEBI:58475"/>
        <dbReference type="ChEBI" id="CHEBI:58525"/>
        <dbReference type="EC" id="4.3.2.10"/>
    </reaction>
</comment>
<comment type="catalytic activity">
    <reaction evidence="1">
        <text>L-glutamine + H2O = L-glutamate + NH4(+)</text>
        <dbReference type="Rhea" id="RHEA:15889"/>
        <dbReference type="ChEBI" id="CHEBI:15377"/>
        <dbReference type="ChEBI" id="CHEBI:28938"/>
        <dbReference type="ChEBI" id="CHEBI:29985"/>
        <dbReference type="ChEBI" id="CHEBI:58359"/>
        <dbReference type="EC" id="3.5.1.2"/>
    </reaction>
</comment>
<comment type="pathway">
    <text evidence="1">Amino-acid biosynthesis; L-histidine biosynthesis; L-histidine from 5-phospho-alpha-D-ribose 1-diphosphate: step 5/9.</text>
</comment>
<comment type="subunit">
    <text evidence="1">Heterodimer of HisH and HisF.</text>
</comment>
<comment type="subcellular location">
    <subcellularLocation>
        <location evidence="1">Cytoplasm</location>
    </subcellularLocation>
</comment>
<organism>
    <name type="scientific">Chlorobium luteolum (strain DSM 273 / BCRC 81028 / 2530)</name>
    <name type="common">Pelodictyon luteolum</name>
    <dbReference type="NCBI Taxonomy" id="319225"/>
    <lineage>
        <taxon>Bacteria</taxon>
        <taxon>Pseudomonadati</taxon>
        <taxon>Chlorobiota</taxon>
        <taxon>Chlorobiia</taxon>
        <taxon>Chlorobiales</taxon>
        <taxon>Chlorobiaceae</taxon>
        <taxon>Chlorobium/Pelodictyon group</taxon>
        <taxon>Pelodictyon</taxon>
    </lineage>
</organism>
<dbReference type="EC" id="4.3.2.10" evidence="1"/>
<dbReference type="EC" id="3.5.1.2" evidence="1"/>
<dbReference type="EMBL" id="CP000096">
    <property type="protein sequence ID" value="ABB24545.1"/>
    <property type="molecule type" value="Genomic_DNA"/>
</dbReference>
<dbReference type="RefSeq" id="WP_011358417.1">
    <property type="nucleotide sequence ID" value="NC_007512.1"/>
</dbReference>
<dbReference type="SMR" id="Q3B286"/>
<dbReference type="STRING" id="319225.Plut_1691"/>
<dbReference type="KEGG" id="plt:Plut_1691"/>
<dbReference type="eggNOG" id="COG0118">
    <property type="taxonomic scope" value="Bacteria"/>
</dbReference>
<dbReference type="HOGENOM" id="CLU_071837_2_2_10"/>
<dbReference type="OrthoDB" id="9807137at2"/>
<dbReference type="UniPathway" id="UPA00031">
    <property type="reaction ID" value="UER00010"/>
</dbReference>
<dbReference type="Proteomes" id="UP000002709">
    <property type="component" value="Chromosome"/>
</dbReference>
<dbReference type="GO" id="GO:0005737">
    <property type="term" value="C:cytoplasm"/>
    <property type="evidence" value="ECO:0007669"/>
    <property type="project" value="UniProtKB-SubCell"/>
</dbReference>
<dbReference type="GO" id="GO:0004359">
    <property type="term" value="F:glutaminase activity"/>
    <property type="evidence" value="ECO:0007669"/>
    <property type="project" value="UniProtKB-EC"/>
</dbReference>
<dbReference type="GO" id="GO:0000107">
    <property type="term" value="F:imidazoleglycerol-phosphate synthase activity"/>
    <property type="evidence" value="ECO:0007669"/>
    <property type="project" value="UniProtKB-UniRule"/>
</dbReference>
<dbReference type="GO" id="GO:0016829">
    <property type="term" value="F:lyase activity"/>
    <property type="evidence" value="ECO:0007669"/>
    <property type="project" value="UniProtKB-KW"/>
</dbReference>
<dbReference type="GO" id="GO:0000105">
    <property type="term" value="P:L-histidine biosynthetic process"/>
    <property type="evidence" value="ECO:0007669"/>
    <property type="project" value="UniProtKB-UniRule"/>
</dbReference>
<dbReference type="CDD" id="cd01748">
    <property type="entry name" value="GATase1_IGP_Synthase"/>
    <property type="match status" value="1"/>
</dbReference>
<dbReference type="Gene3D" id="3.40.50.880">
    <property type="match status" value="1"/>
</dbReference>
<dbReference type="HAMAP" id="MF_00278">
    <property type="entry name" value="HisH"/>
    <property type="match status" value="1"/>
</dbReference>
<dbReference type="InterPro" id="IPR029062">
    <property type="entry name" value="Class_I_gatase-like"/>
</dbReference>
<dbReference type="InterPro" id="IPR017926">
    <property type="entry name" value="GATASE"/>
</dbReference>
<dbReference type="InterPro" id="IPR010139">
    <property type="entry name" value="Imidazole-glycPsynth_HisH"/>
</dbReference>
<dbReference type="NCBIfam" id="TIGR01855">
    <property type="entry name" value="IMP_synth_hisH"/>
    <property type="match status" value="1"/>
</dbReference>
<dbReference type="PANTHER" id="PTHR42701">
    <property type="entry name" value="IMIDAZOLE GLYCEROL PHOSPHATE SYNTHASE SUBUNIT HISH"/>
    <property type="match status" value="1"/>
</dbReference>
<dbReference type="PANTHER" id="PTHR42701:SF1">
    <property type="entry name" value="IMIDAZOLE GLYCEROL PHOSPHATE SYNTHASE SUBUNIT HISH"/>
    <property type="match status" value="1"/>
</dbReference>
<dbReference type="Pfam" id="PF00117">
    <property type="entry name" value="GATase"/>
    <property type="match status" value="1"/>
</dbReference>
<dbReference type="PIRSF" id="PIRSF000495">
    <property type="entry name" value="Amidotransf_hisH"/>
    <property type="match status" value="1"/>
</dbReference>
<dbReference type="SUPFAM" id="SSF52317">
    <property type="entry name" value="Class I glutamine amidotransferase-like"/>
    <property type="match status" value="1"/>
</dbReference>
<dbReference type="PROSITE" id="PS51273">
    <property type="entry name" value="GATASE_TYPE_1"/>
    <property type="match status" value="1"/>
</dbReference>
<accession>Q3B286</accession>